<comment type="subcellular location">
    <subcellularLocation>
        <location evidence="1">Nucleus</location>
    </subcellularLocation>
</comment>
<accession>G2TRN9</accession>
<evidence type="ECO:0000255" key="1">
    <source>
        <dbReference type="PROSITE-ProRule" id="PRU00227"/>
    </source>
</evidence>
<reference key="1">
    <citation type="journal article" date="2002" name="Nature">
        <title>The genome sequence of Schizosaccharomyces pombe.</title>
        <authorList>
            <person name="Wood V."/>
            <person name="Gwilliam R."/>
            <person name="Rajandream M.A."/>
            <person name="Lyne M.H."/>
            <person name="Lyne R."/>
            <person name="Stewart A."/>
            <person name="Sgouros J.G."/>
            <person name="Peat N."/>
            <person name="Hayles J."/>
            <person name="Baker S.G."/>
            <person name="Basham D."/>
            <person name="Bowman S."/>
            <person name="Brooks K."/>
            <person name="Brown D."/>
            <person name="Brown S."/>
            <person name="Chillingworth T."/>
            <person name="Churcher C.M."/>
            <person name="Collins M."/>
            <person name="Connor R."/>
            <person name="Cronin A."/>
            <person name="Davis P."/>
            <person name="Feltwell T."/>
            <person name="Fraser A."/>
            <person name="Gentles S."/>
            <person name="Goble A."/>
            <person name="Hamlin N."/>
            <person name="Harris D.E."/>
            <person name="Hidalgo J."/>
            <person name="Hodgson G."/>
            <person name="Holroyd S."/>
            <person name="Hornsby T."/>
            <person name="Howarth S."/>
            <person name="Huckle E.J."/>
            <person name="Hunt S."/>
            <person name="Jagels K."/>
            <person name="James K.D."/>
            <person name="Jones L."/>
            <person name="Jones M."/>
            <person name="Leather S."/>
            <person name="McDonald S."/>
            <person name="McLean J."/>
            <person name="Mooney P."/>
            <person name="Moule S."/>
            <person name="Mungall K.L."/>
            <person name="Murphy L.D."/>
            <person name="Niblett D."/>
            <person name="Odell C."/>
            <person name="Oliver K."/>
            <person name="O'Neil S."/>
            <person name="Pearson D."/>
            <person name="Quail M.A."/>
            <person name="Rabbinowitsch E."/>
            <person name="Rutherford K.M."/>
            <person name="Rutter S."/>
            <person name="Saunders D."/>
            <person name="Seeger K."/>
            <person name="Sharp S."/>
            <person name="Skelton J."/>
            <person name="Simmonds M.N."/>
            <person name="Squares R."/>
            <person name="Squares S."/>
            <person name="Stevens K."/>
            <person name="Taylor K."/>
            <person name="Taylor R.G."/>
            <person name="Tivey A."/>
            <person name="Walsh S.V."/>
            <person name="Warren T."/>
            <person name="Whitehead S."/>
            <person name="Woodward J.R."/>
            <person name="Volckaert G."/>
            <person name="Aert R."/>
            <person name="Robben J."/>
            <person name="Grymonprez B."/>
            <person name="Weltjens I."/>
            <person name="Vanstreels E."/>
            <person name="Rieger M."/>
            <person name="Schaefer M."/>
            <person name="Mueller-Auer S."/>
            <person name="Gabel C."/>
            <person name="Fuchs M."/>
            <person name="Duesterhoeft A."/>
            <person name="Fritzc C."/>
            <person name="Holzer E."/>
            <person name="Moestl D."/>
            <person name="Hilbert H."/>
            <person name="Borzym K."/>
            <person name="Langer I."/>
            <person name="Beck A."/>
            <person name="Lehrach H."/>
            <person name="Reinhardt R."/>
            <person name="Pohl T.M."/>
            <person name="Eger P."/>
            <person name="Zimmermann W."/>
            <person name="Wedler H."/>
            <person name="Wambutt R."/>
            <person name="Purnelle B."/>
            <person name="Goffeau A."/>
            <person name="Cadieu E."/>
            <person name="Dreano S."/>
            <person name="Gloux S."/>
            <person name="Lelaure V."/>
            <person name="Mottier S."/>
            <person name="Galibert F."/>
            <person name="Aves S.J."/>
            <person name="Xiang Z."/>
            <person name="Hunt C."/>
            <person name="Moore K."/>
            <person name="Hurst S.M."/>
            <person name="Lucas M."/>
            <person name="Rochet M."/>
            <person name="Gaillardin C."/>
            <person name="Tallada V.A."/>
            <person name="Garzon A."/>
            <person name="Thode G."/>
            <person name="Daga R.R."/>
            <person name="Cruzado L."/>
            <person name="Jimenez J."/>
            <person name="Sanchez M."/>
            <person name="del Rey F."/>
            <person name="Benito J."/>
            <person name="Dominguez A."/>
            <person name="Revuelta J.L."/>
            <person name="Moreno S."/>
            <person name="Armstrong J."/>
            <person name="Forsburg S.L."/>
            <person name="Cerutti L."/>
            <person name="Lowe T."/>
            <person name="McCombie W.R."/>
            <person name="Paulsen I."/>
            <person name="Potashkin J."/>
            <person name="Shpakovski G.V."/>
            <person name="Ussery D."/>
            <person name="Barrell B.G."/>
            <person name="Nurse P."/>
        </authorList>
    </citation>
    <scope>NUCLEOTIDE SEQUENCE [LARGE SCALE GENOMIC DNA]</scope>
    <source>
        <strain>972 / ATCC 24843</strain>
    </source>
</reference>
<reference key="2">
    <citation type="journal article" date="2011" name="Genetics">
        <title>Augmented annotation of the Schizosaccharomyces pombe genome reveals additional genes required for growth and viability.</title>
        <authorList>
            <person name="Bitton D.A."/>
            <person name="Wood V."/>
            <person name="Scutt P.J."/>
            <person name="Grallert A."/>
            <person name="Yates T."/>
            <person name="Smith D.L."/>
            <person name="Hagan I.M."/>
            <person name="Miller C.J."/>
        </authorList>
    </citation>
    <scope>REVISION OF GENE MODEL</scope>
    <scope>IDENTIFICATION BY MASS SPECTROMETRY</scope>
</reference>
<proteinExistence type="evidence at protein level"/>
<gene>
    <name type="ORF">SPAC11D3.11c</name>
</gene>
<organism>
    <name type="scientific">Schizosaccharomyces pombe (strain 972 / ATCC 24843)</name>
    <name type="common">Fission yeast</name>
    <dbReference type="NCBI Taxonomy" id="284812"/>
    <lineage>
        <taxon>Eukaryota</taxon>
        <taxon>Fungi</taxon>
        <taxon>Dikarya</taxon>
        <taxon>Ascomycota</taxon>
        <taxon>Taphrinomycotina</taxon>
        <taxon>Schizosaccharomycetes</taxon>
        <taxon>Schizosaccharomycetales</taxon>
        <taxon>Schizosaccharomycetaceae</taxon>
        <taxon>Schizosaccharomyces</taxon>
    </lineage>
</organism>
<sequence length="357" mass="40772">MRSLSCIVCRQKKIKCDRKNPCTNCEQAGEKCMFKEYDSRKIRHPHSYVKALETRLAGLEAFWKRVKYAPVNEKLELLKTISFNDHLSPDISVSKTDTTFEFPVSLDIRGPNTIAFYGPTNVYGPPLTPSSPETPSFPPQNPSFSPLITDCLKLFFKWQYPQFLFINREAFLVDYYYRYHEGRYCSEHLLYAMCAIGSRMSVDPNIAALAKNFYQIAWNKIIEYGLGKSHITSIQCLLCLGYFNIGMGNTSLGWMLSGMAFRMGQDLGFQLNPRNWSVNDHPVVSPADAAVRSRIYWGSYVTDIFISFVLGRPTTLKKSDTSIPDSESLPDFDGVNEYRVNNALLLKEYLCIQSSVY</sequence>
<protein>
    <recommendedName>
        <fullName>Uncharacterized transcriptional regulatory protein C11D3.11c</fullName>
    </recommendedName>
</protein>
<name>YAOB_SCHPO</name>
<keyword id="KW-0238">DNA-binding</keyword>
<keyword id="KW-0479">Metal-binding</keyword>
<keyword id="KW-0539">Nucleus</keyword>
<keyword id="KW-1185">Reference proteome</keyword>
<keyword id="KW-0804">Transcription</keyword>
<keyword id="KW-0805">Transcription regulation</keyword>
<keyword id="KW-0862">Zinc</keyword>
<dbReference type="EMBL" id="CU329670">
    <property type="protein sequence ID" value="CAO77635.2"/>
    <property type="molecule type" value="Genomic_DNA"/>
</dbReference>
<dbReference type="RefSeq" id="XP_004001763.1">
    <property type="nucleotide sequence ID" value="XM_004001714.1"/>
</dbReference>
<dbReference type="SMR" id="G2TRN9"/>
<dbReference type="FunCoup" id="G2TRN9">
    <property type="interactions" value="30"/>
</dbReference>
<dbReference type="STRING" id="284812.G2TRN9"/>
<dbReference type="PaxDb" id="4896-SPAC11D3.11c.1"/>
<dbReference type="EnsemblFungi" id="SPAC11D3.11c.1">
    <property type="protein sequence ID" value="SPAC11D3.11c.1:pep"/>
    <property type="gene ID" value="SPAC11D3.11c"/>
</dbReference>
<dbReference type="PomBase" id="SPAC11D3.11c"/>
<dbReference type="VEuPathDB" id="FungiDB:SPAC11D3.11c"/>
<dbReference type="eggNOG" id="ENOG502QTSE">
    <property type="taxonomic scope" value="Eukaryota"/>
</dbReference>
<dbReference type="HOGENOM" id="CLU_015811_3_0_1"/>
<dbReference type="InParanoid" id="G2TRN9"/>
<dbReference type="OMA" id="SWQNTWQ"/>
<dbReference type="PRO" id="PR:G2TRN9"/>
<dbReference type="Proteomes" id="UP000002485">
    <property type="component" value="Chromosome I"/>
</dbReference>
<dbReference type="GO" id="GO:0005634">
    <property type="term" value="C:nucleus"/>
    <property type="evidence" value="ECO:0007669"/>
    <property type="project" value="UniProtKB-SubCell"/>
</dbReference>
<dbReference type="GO" id="GO:0000981">
    <property type="term" value="F:DNA-binding transcription factor activity, RNA polymerase II-specific"/>
    <property type="evidence" value="ECO:0000255"/>
    <property type="project" value="PomBase"/>
</dbReference>
<dbReference type="GO" id="GO:0000978">
    <property type="term" value="F:RNA polymerase II cis-regulatory region sequence-specific DNA binding"/>
    <property type="evidence" value="ECO:0000255"/>
    <property type="project" value="PomBase"/>
</dbReference>
<dbReference type="GO" id="GO:0008270">
    <property type="term" value="F:zinc ion binding"/>
    <property type="evidence" value="ECO:0007669"/>
    <property type="project" value="InterPro"/>
</dbReference>
<dbReference type="GO" id="GO:0006351">
    <property type="term" value="P:DNA-templated transcription"/>
    <property type="evidence" value="ECO:0007669"/>
    <property type="project" value="InterPro"/>
</dbReference>
<dbReference type="GO" id="GO:0006357">
    <property type="term" value="P:regulation of transcription by RNA polymerase II"/>
    <property type="evidence" value="ECO:0000255"/>
    <property type="project" value="PomBase"/>
</dbReference>
<dbReference type="CDD" id="cd12148">
    <property type="entry name" value="fungal_TF_MHR"/>
    <property type="match status" value="1"/>
</dbReference>
<dbReference type="CDD" id="cd00067">
    <property type="entry name" value="GAL4"/>
    <property type="match status" value="1"/>
</dbReference>
<dbReference type="FunFam" id="4.10.240.10:FF:000018">
    <property type="entry name" value="Casein kinase II subunit beta"/>
    <property type="match status" value="1"/>
</dbReference>
<dbReference type="Gene3D" id="4.10.240.10">
    <property type="entry name" value="Zn(2)-C6 fungal-type DNA-binding domain"/>
    <property type="match status" value="1"/>
</dbReference>
<dbReference type="InterPro" id="IPR051615">
    <property type="entry name" value="Transcr_Regulatory_Elem"/>
</dbReference>
<dbReference type="InterPro" id="IPR007219">
    <property type="entry name" value="Transcription_factor_dom_fun"/>
</dbReference>
<dbReference type="InterPro" id="IPR036864">
    <property type="entry name" value="Zn2-C6_fun-type_DNA-bd_sf"/>
</dbReference>
<dbReference type="InterPro" id="IPR001138">
    <property type="entry name" value="Zn2Cys6_DnaBD"/>
</dbReference>
<dbReference type="PANTHER" id="PTHR31313">
    <property type="entry name" value="TY1 ENHANCER ACTIVATOR"/>
    <property type="match status" value="1"/>
</dbReference>
<dbReference type="PANTHER" id="PTHR31313:SF81">
    <property type="entry name" value="TY1 ENHANCER ACTIVATOR"/>
    <property type="match status" value="1"/>
</dbReference>
<dbReference type="Pfam" id="PF04082">
    <property type="entry name" value="Fungal_trans"/>
    <property type="match status" value="1"/>
</dbReference>
<dbReference type="Pfam" id="PF00172">
    <property type="entry name" value="Zn_clus"/>
    <property type="match status" value="1"/>
</dbReference>
<dbReference type="SMART" id="SM00906">
    <property type="entry name" value="Fungal_trans"/>
    <property type="match status" value="1"/>
</dbReference>
<dbReference type="SMART" id="SM00066">
    <property type="entry name" value="GAL4"/>
    <property type="match status" value="1"/>
</dbReference>
<dbReference type="SUPFAM" id="SSF57701">
    <property type="entry name" value="Zn2/Cys6 DNA-binding domain"/>
    <property type="match status" value="1"/>
</dbReference>
<dbReference type="PROSITE" id="PS00463">
    <property type="entry name" value="ZN2_CY6_FUNGAL_1"/>
    <property type="match status" value="1"/>
</dbReference>
<dbReference type="PROSITE" id="PS50048">
    <property type="entry name" value="ZN2_CY6_FUNGAL_2"/>
    <property type="match status" value="1"/>
</dbReference>
<feature type="chain" id="PRO_0000416587" description="Uncharacterized transcriptional regulatory protein C11D3.11c">
    <location>
        <begin position="1"/>
        <end position="357"/>
    </location>
</feature>
<feature type="DNA-binding region" description="Zn(2)-C6 fungal-type" evidence="1">
    <location>
        <begin position="6"/>
        <end position="32"/>
    </location>
</feature>